<dbReference type="EMBL" id="AE001273">
    <property type="protein sequence ID" value="AAC68011.1"/>
    <property type="molecule type" value="Genomic_DNA"/>
</dbReference>
<dbReference type="PIR" id="A71517">
    <property type="entry name" value="A71517"/>
</dbReference>
<dbReference type="RefSeq" id="NP_219924.1">
    <property type="nucleotide sequence ID" value="NC_000117.1"/>
</dbReference>
<dbReference type="RefSeq" id="WP_010725193.1">
    <property type="nucleotide sequence ID" value="NC_000117.1"/>
</dbReference>
<dbReference type="STRING" id="272561.CT_414"/>
<dbReference type="EnsemblBacteria" id="AAC68011">
    <property type="protein sequence ID" value="AAC68011"/>
    <property type="gene ID" value="CT_414"/>
</dbReference>
<dbReference type="GeneID" id="884702"/>
<dbReference type="KEGG" id="ctr:CT_414"/>
<dbReference type="PATRIC" id="fig|272561.5.peg.445"/>
<dbReference type="HOGENOM" id="CLU_001452_0_0_0"/>
<dbReference type="InParanoid" id="O84419"/>
<dbReference type="OrthoDB" id="198251at2"/>
<dbReference type="Proteomes" id="UP000000431">
    <property type="component" value="Chromosome"/>
</dbReference>
<dbReference type="GO" id="GO:0009279">
    <property type="term" value="C:cell outer membrane"/>
    <property type="evidence" value="ECO:0007669"/>
    <property type="project" value="UniProtKB-SubCell"/>
</dbReference>
<dbReference type="GO" id="GO:0005576">
    <property type="term" value="C:extracellular region"/>
    <property type="evidence" value="ECO:0007669"/>
    <property type="project" value="UniProtKB-KW"/>
</dbReference>
<dbReference type="Gene3D" id="2.40.128.130">
    <property type="entry name" value="Autotransporter beta-domain"/>
    <property type="match status" value="1"/>
</dbReference>
<dbReference type="InterPro" id="IPR005546">
    <property type="entry name" value="Autotransporte_beta"/>
</dbReference>
<dbReference type="InterPro" id="IPR036709">
    <property type="entry name" value="Autotransporte_beta_dom_sf"/>
</dbReference>
<dbReference type="InterPro" id="IPR011050">
    <property type="entry name" value="Pectin_lyase_fold/virulence"/>
</dbReference>
<dbReference type="InterPro" id="IPR011427">
    <property type="entry name" value="Polymorphic_membr_middle"/>
</dbReference>
<dbReference type="InterPro" id="IPR003368">
    <property type="entry name" value="POMP_repeat"/>
</dbReference>
<dbReference type="NCBIfam" id="TIGR01376">
    <property type="entry name" value="POMP_repeat"/>
    <property type="match status" value="6"/>
</dbReference>
<dbReference type="Pfam" id="PF03797">
    <property type="entry name" value="Autotransporter"/>
    <property type="match status" value="1"/>
</dbReference>
<dbReference type="Pfam" id="PF02415">
    <property type="entry name" value="Chlam_PMP"/>
    <property type="match status" value="4"/>
</dbReference>
<dbReference type="Pfam" id="PF07548">
    <property type="entry name" value="ChlamPMP_M"/>
    <property type="match status" value="1"/>
</dbReference>
<dbReference type="SMART" id="SM00869">
    <property type="entry name" value="Autotransporter"/>
    <property type="match status" value="1"/>
</dbReference>
<dbReference type="SUPFAM" id="SSF103515">
    <property type="entry name" value="Autotransporter"/>
    <property type="match status" value="1"/>
</dbReference>
<dbReference type="SUPFAM" id="SSF51126">
    <property type="entry name" value="Pectin lyase-like"/>
    <property type="match status" value="1"/>
</dbReference>
<dbReference type="PROSITE" id="PS51208">
    <property type="entry name" value="AUTOTRANSPORTER"/>
    <property type="match status" value="1"/>
</dbReference>
<sequence>MKFMSATAVFAAALSSVTEASSIQDQIKNTDCNVSKLGYSTSQAFTDMMLADNTEYRAADSVSFYDFSTSSRLPRKHLSSSSEASPTTEGVSSSSSGETDEKTEEELDNGGIIYAREKLTISESQDSLSNQSIELHDNSIFFGEGEVIFDHRVALKNGGAIYGEKEVVFENIKSLLVEVNIAVEKGGSVYAKERVSLENVTEATFSSNGGEQGGGGIYSEQDMLISDCNNVHFQGNAAGATAVKQCLDEEMIVLLAECVDSLSEDTLDSTPETEQTESNGNQDGSSETEDTQVSESPESTPSPDDVLGKGGGIYTEKSLTITGITGTIDFVSNIATDSGAGVFTKENLSCTNTNSLQFLKNSAGQHGGGAYVTQTMSVTNTTSESITTPPLIGEVIFSENTAKGHGGGICTNKLSLSNLKTVTLTKNSAKESGGAIFTDLASIPITDTPESSTPSSSSPASTPEVVASAKINRFFASTAKPAAPSLTEAESDQTDQTETSDTNSDIDVSIENILNVAINQNTSAKKGGAIYGKKAKLSRINNLELSGNSSQDVGGGLCLTESVEFDAIGSLLSHYNSAAKEGGAIHSKTVTLSNLKSTFTFADNTVKAIVESTPEAPEEIPPVEGEESTATEDPNSNTEGSSANTNLEGSQGDTADTGTGDVNNESQDTSDTGNAESEEQLQDSTQSNEENTLPNSNIDQSNENTDESSDSHTEEITDESVSSSSESGSSTPQDGGAASSGAPSGDQSISANACLAKSYAASTDSSPVSNSSGSEEPVTSSSDSDVTASSDNPDSSSSGDSAGDSEEPTEPEAGSTTETLTLIGGGAIYGETVKIENFSGQGIFSGNKAIDNTTEGSSSKSDVLGGAVYAKTLFNLDSGSSRRTVTFSGNTVSSQSTTGQVAGGAIYSPTVTIATPVVFSKNSATNNANNTTDTQRKDTFGGAIGATSAVSLSGGAHFLENVADLGSAIGLVPGTQNTETVKLESGSYYFEKNKALKRATIYAPVVSIKAYTATFNQNRSLEEGSAIYFTKEASIESLGSVLFTGNLVTLTLSTTTEGTPATTSGDVTKYGAAIFGQIASSNGSQTDNLPLKLIASGGNICFRNNEYRPTSSDTGTSTFCSIAGDVKLTMQAAKGKTISFFDAIRTSTKKTGTQATAYDTLDINKSEDSETVNSAFTGTILFSSELHENKSYIPQNVVLHSGSLVLKPNTELHVISFEQKEGSSLVMTPGSVLSNQTVADGALVINNMTIDLSSVEKNGIAEGNIFTPPELRIIDTTTGGSGGTPSTDSESNQNSDDTEEQNNNDASNQGESANGSSSPAVAAAHTSRTRNFAAAATATPTTTPTATTTTSNQVILGGEIKLIDPNGTFFQNPALRSDQQISLLVLPTDSSKMQAQKIVLTGDIAPQKGYTGTLTLDPDQLQNGTISVLWKFDSYRQWAYVPRDNHFYANSILGSQMLMVTVKQGLLNDKMNLARFEEVSYNNLWISGLGTMLSQVGTPTSEEFTYYSRGASVALDAKPAHDVIVGAAFSKMIGKTKSLKRENNYTHKGSEYSYQASVYGGKPFHFVINKKTEKSLPLLLQGVISYGYIKHDTVTHYPTIRERNKGEWEDLGWLTALRVSSVLRTPAQGDTKRITVYGELEYSSIRQKQFTETEYDPRYFDNCTYRNLAIPMGLAFEGELSGNDILMYNRFSVAYMLSIYRNSPTCKYQVLSSGEGGEIICGVPTRNSARGEYSTQLYLGPLWTLYGSYTIEADAHTLAHMMNCGARMTF</sequence>
<evidence type="ECO:0000255" key="1"/>
<evidence type="ECO:0000255" key="2">
    <source>
        <dbReference type="PROSITE-ProRule" id="PRU00556"/>
    </source>
</evidence>
<evidence type="ECO:0000256" key="3">
    <source>
        <dbReference type="SAM" id="MobiDB-lite"/>
    </source>
</evidence>
<evidence type="ECO:0000305" key="4"/>
<name>PMPC_CHLTR</name>
<gene>
    <name type="primary">pmpC</name>
    <name type="ordered locus">CT_414</name>
</gene>
<feature type="signal peptide" evidence="1">
    <location>
        <begin position="1"/>
        <end position="20"/>
    </location>
</feature>
<feature type="chain" id="PRO_0000024721" description="Probable outer membrane protein PmpC">
    <location>
        <begin position="21"/>
        <end position="1770"/>
    </location>
</feature>
<feature type="domain" description="Autotransporter" evidence="2">
    <location>
        <begin position="1477"/>
        <end position="1770"/>
    </location>
</feature>
<feature type="region of interest" description="Disordered" evidence="3">
    <location>
        <begin position="73"/>
        <end position="109"/>
    </location>
</feature>
<feature type="region of interest" description="Disordered" evidence="3">
    <location>
        <begin position="264"/>
        <end position="311"/>
    </location>
</feature>
<feature type="region of interest" description="Disordered" evidence="3">
    <location>
        <begin position="481"/>
        <end position="505"/>
    </location>
</feature>
<feature type="region of interest" description="Disordered" evidence="3">
    <location>
        <begin position="611"/>
        <end position="818"/>
    </location>
</feature>
<feature type="region of interest" description="Disordered" evidence="3">
    <location>
        <begin position="1271"/>
        <end position="1329"/>
    </location>
</feature>
<feature type="compositionally biased region" description="Low complexity" evidence="3">
    <location>
        <begin position="85"/>
        <end position="97"/>
    </location>
</feature>
<feature type="compositionally biased region" description="Polar residues" evidence="3">
    <location>
        <begin position="268"/>
        <end position="285"/>
    </location>
</feature>
<feature type="compositionally biased region" description="Low complexity" evidence="3">
    <location>
        <begin position="294"/>
        <end position="303"/>
    </location>
</feature>
<feature type="compositionally biased region" description="Low complexity" evidence="3">
    <location>
        <begin position="496"/>
        <end position="505"/>
    </location>
</feature>
<feature type="compositionally biased region" description="Polar residues" evidence="3">
    <location>
        <begin position="631"/>
        <end position="675"/>
    </location>
</feature>
<feature type="compositionally biased region" description="Polar residues" evidence="3">
    <location>
        <begin position="682"/>
        <end position="703"/>
    </location>
</feature>
<feature type="compositionally biased region" description="Low complexity" evidence="3">
    <location>
        <begin position="719"/>
        <end position="748"/>
    </location>
</feature>
<feature type="compositionally biased region" description="Low complexity" evidence="3">
    <location>
        <begin position="762"/>
        <end position="802"/>
    </location>
</feature>
<feature type="compositionally biased region" description="Polar residues" evidence="3">
    <location>
        <begin position="1303"/>
        <end position="1319"/>
    </location>
</feature>
<comment type="subcellular location">
    <subcellularLocation>
        <location>Secreted</location>
        <location>Cell wall</location>
    </subcellularLocation>
    <subcellularLocation>
        <location evidence="4">Cell outer membrane</location>
        <topology evidence="4">Peripheral membrane protein</topology>
        <orientation evidence="4">Extracellular side</orientation>
    </subcellularLocation>
</comment>
<comment type="developmental stage">
    <text>Elementary body.</text>
</comment>
<comment type="similarity">
    <text evidence="4">Belongs to the PMP outer membrane protein family.</text>
</comment>
<accession>O84419</accession>
<keyword id="KW-0998">Cell outer membrane</keyword>
<keyword id="KW-0134">Cell wall</keyword>
<keyword id="KW-0472">Membrane</keyword>
<keyword id="KW-1185">Reference proteome</keyword>
<keyword id="KW-0964">Secreted</keyword>
<keyword id="KW-0732">Signal</keyword>
<keyword id="KW-0812">Transmembrane</keyword>
<keyword id="KW-1134">Transmembrane beta strand</keyword>
<organism>
    <name type="scientific">Chlamydia trachomatis serovar D (strain ATCC VR-885 / DSM 19411 / UW-3/Cx)</name>
    <dbReference type="NCBI Taxonomy" id="272561"/>
    <lineage>
        <taxon>Bacteria</taxon>
        <taxon>Pseudomonadati</taxon>
        <taxon>Chlamydiota</taxon>
        <taxon>Chlamydiia</taxon>
        <taxon>Chlamydiales</taxon>
        <taxon>Chlamydiaceae</taxon>
        <taxon>Chlamydia/Chlamydophila group</taxon>
        <taxon>Chlamydia</taxon>
    </lineage>
</organism>
<proteinExistence type="evidence at transcript level"/>
<protein>
    <recommendedName>
        <fullName>Probable outer membrane protein PmpC</fullName>
    </recommendedName>
    <alternativeName>
        <fullName>Polymorphic membrane protein C</fullName>
    </alternativeName>
</protein>
<reference key="1">
    <citation type="journal article" date="1998" name="Science">
        <title>Genome sequence of an obligate intracellular pathogen of humans: Chlamydia trachomatis.</title>
        <authorList>
            <person name="Stephens R.S."/>
            <person name="Kalman S."/>
            <person name="Lammel C.J."/>
            <person name="Fan J."/>
            <person name="Marathe R."/>
            <person name="Aravind L."/>
            <person name="Mitchell W.P."/>
            <person name="Olinger L."/>
            <person name="Tatusov R.L."/>
            <person name="Zhao Q."/>
            <person name="Koonin E.V."/>
            <person name="Davis R.W."/>
        </authorList>
    </citation>
    <scope>NUCLEOTIDE SEQUENCE [LARGE SCALE GENOMIC DNA]</scope>
    <source>
        <strain>ATCC VR-885 / DSM 19411 / UW-3/Cx</strain>
    </source>
</reference>